<keyword id="KW-0002">3D-structure</keyword>
<keyword id="KW-0175">Coiled coil</keyword>
<keyword id="KW-1017">Isopeptide bond</keyword>
<keyword id="KW-1185">Reference proteome</keyword>
<keyword id="KW-0833">Ubl conjugation pathway</keyword>
<protein>
    <recommendedName>
        <fullName evidence="1">Prokaryotic ubiquitin-like protein Pup</fullName>
    </recommendedName>
    <alternativeName>
        <fullName evidence="1">Bacterial ubiquitin-like modifier</fullName>
    </alternativeName>
</protein>
<name>PUP_ACIC1</name>
<feature type="chain" id="PRO_0000390567" description="Prokaryotic ubiquitin-like protein Pup">
    <location>
        <begin position="1"/>
        <end position="71"/>
    </location>
</feature>
<feature type="region of interest" description="Disordered" evidence="2">
    <location>
        <begin position="1"/>
        <end position="36"/>
    </location>
</feature>
<feature type="region of interest" description="ARC ATPase binding" evidence="1">
    <location>
        <begin position="27"/>
        <end position="65"/>
    </location>
</feature>
<feature type="coiled-coil region" evidence="1">
    <location>
        <begin position="30"/>
        <end position="59"/>
    </location>
</feature>
<feature type="compositionally biased region" description="Basic and acidic residues" evidence="2">
    <location>
        <begin position="1"/>
        <end position="18"/>
    </location>
</feature>
<feature type="cross-link" description="Isoglutamyl lysine isopeptide (Glu-Lys) (interchain with K-? in acceptor proteins)" evidence="1">
    <location>
        <position position="71"/>
    </location>
</feature>
<feature type="helix" evidence="3">
    <location>
        <begin position="45"/>
        <end position="53"/>
    </location>
</feature>
<feature type="helix" evidence="3">
    <location>
        <begin position="58"/>
        <end position="64"/>
    </location>
</feature>
<sequence>MPEKDTGGQHRATRRTEEHDETIDEATATSDVQERREKLDADVDAILDEIDDVLEENAEEFVRSYIQKGGE</sequence>
<evidence type="ECO:0000255" key="1">
    <source>
        <dbReference type="HAMAP-Rule" id="MF_02106"/>
    </source>
</evidence>
<evidence type="ECO:0000256" key="2">
    <source>
        <dbReference type="SAM" id="MobiDB-lite"/>
    </source>
</evidence>
<evidence type="ECO:0007829" key="3">
    <source>
        <dbReference type="PDB" id="7OXY"/>
    </source>
</evidence>
<proteinExistence type="evidence at protein level"/>
<reference key="1">
    <citation type="journal article" date="2009" name="Genome Res.">
        <title>Complete genome of the cellulolytic thermophile Acidothermus cellulolyticus 11B provides insights into its ecophysiological and evolutionary adaptations.</title>
        <authorList>
            <person name="Barabote R.D."/>
            <person name="Xie G."/>
            <person name="Leu D.H."/>
            <person name="Normand P."/>
            <person name="Necsulea A."/>
            <person name="Daubin V."/>
            <person name="Medigue C."/>
            <person name="Adney W.S."/>
            <person name="Xu X.C."/>
            <person name="Lapidus A."/>
            <person name="Parales R.E."/>
            <person name="Detter C."/>
            <person name="Pujic P."/>
            <person name="Bruce D."/>
            <person name="Lavire C."/>
            <person name="Challacombe J.F."/>
            <person name="Brettin T.S."/>
            <person name="Berry A.M."/>
        </authorList>
    </citation>
    <scope>NUCLEOTIDE SEQUENCE [LARGE SCALE GENOMIC DNA]</scope>
    <source>
        <strain>ATCC 43068 / DSM 8971 / 11B</strain>
    </source>
</reference>
<dbReference type="EMBL" id="CP000481">
    <property type="protein sequence ID" value="ABK52959.1"/>
    <property type="molecule type" value="Genomic_DNA"/>
</dbReference>
<dbReference type="RefSeq" id="WP_011720022.1">
    <property type="nucleotide sequence ID" value="NC_008578.1"/>
</dbReference>
<dbReference type="PDB" id="7OXY">
    <property type="method" value="X-ray"/>
    <property type="resolution" value="1.65 A"/>
    <property type="chains" value="B=44-71"/>
</dbReference>
<dbReference type="PDB" id="7OY3">
    <property type="method" value="X-ray"/>
    <property type="resolution" value="1.78 A"/>
    <property type="chains" value="B=44-71"/>
</dbReference>
<dbReference type="PDB" id="7OYF">
    <property type="method" value="X-ray"/>
    <property type="resolution" value="1.88 A"/>
    <property type="chains" value="B=44-71"/>
</dbReference>
<dbReference type="PDB" id="7OYH">
    <property type="method" value="X-ray"/>
    <property type="resolution" value="1.75 A"/>
    <property type="chains" value="B=44-71"/>
</dbReference>
<dbReference type="PDBsum" id="7OXY"/>
<dbReference type="PDBsum" id="7OY3"/>
<dbReference type="PDBsum" id="7OYF"/>
<dbReference type="PDBsum" id="7OYH"/>
<dbReference type="SMR" id="A0LU49"/>
<dbReference type="FunCoup" id="A0LU49">
    <property type="interactions" value="1"/>
</dbReference>
<dbReference type="STRING" id="351607.Acel_1187"/>
<dbReference type="KEGG" id="ace:Acel_1187"/>
<dbReference type="eggNOG" id="ENOG50333JS">
    <property type="taxonomic scope" value="Bacteria"/>
</dbReference>
<dbReference type="HOGENOM" id="CLU_183816_2_0_11"/>
<dbReference type="InParanoid" id="A0LU49"/>
<dbReference type="OrthoDB" id="3254977at2"/>
<dbReference type="BRENDA" id="3.5.1.119">
    <property type="organism ID" value="9545"/>
</dbReference>
<dbReference type="UniPathway" id="UPA00997"/>
<dbReference type="Proteomes" id="UP000008221">
    <property type="component" value="Chromosome"/>
</dbReference>
<dbReference type="GO" id="GO:0070628">
    <property type="term" value="F:proteasome binding"/>
    <property type="evidence" value="ECO:0007669"/>
    <property type="project" value="UniProtKB-UniRule"/>
</dbReference>
<dbReference type="GO" id="GO:0031386">
    <property type="term" value="F:protein tag activity"/>
    <property type="evidence" value="ECO:0007669"/>
    <property type="project" value="UniProtKB-UniRule"/>
</dbReference>
<dbReference type="GO" id="GO:0019941">
    <property type="term" value="P:modification-dependent protein catabolic process"/>
    <property type="evidence" value="ECO:0007669"/>
    <property type="project" value="UniProtKB-UniRule"/>
</dbReference>
<dbReference type="GO" id="GO:0010498">
    <property type="term" value="P:proteasomal protein catabolic process"/>
    <property type="evidence" value="ECO:0007669"/>
    <property type="project" value="UniProtKB-UniRule"/>
</dbReference>
<dbReference type="GO" id="GO:0070490">
    <property type="term" value="P:protein pupylation"/>
    <property type="evidence" value="ECO:0007669"/>
    <property type="project" value="UniProtKB-UniRule"/>
</dbReference>
<dbReference type="HAMAP" id="MF_02106">
    <property type="entry name" value="Pup"/>
    <property type="match status" value="1"/>
</dbReference>
<dbReference type="InterPro" id="IPR008515">
    <property type="entry name" value="Ubiquitin-like_Pup"/>
</dbReference>
<dbReference type="NCBIfam" id="TIGR03687">
    <property type="entry name" value="pupylate_cterm"/>
    <property type="match status" value="1"/>
</dbReference>
<dbReference type="Pfam" id="PF05639">
    <property type="entry name" value="Pup"/>
    <property type="match status" value="1"/>
</dbReference>
<organism>
    <name type="scientific">Acidothermus cellulolyticus (strain ATCC 43068 / DSM 8971 / 11B)</name>
    <dbReference type="NCBI Taxonomy" id="351607"/>
    <lineage>
        <taxon>Bacteria</taxon>
        <taxon>Bacillati</taxon>
        <taxon>Actinomycetota</taxon>
        <taxon>Actinomycetes</taxon>
        <taxon>Acidothermales</taxon>
        <taxon>Acidothermaceae</taxon>
        <taxon>Acidothermus</taxon>
    </lineage>
</organism>
<comment type="function">
    <text evidence="1">Protein modifier that is covalently attached to lysine residues of substrate proteins, thereby targeting them for proteasomal degradation. The tagging system is termed pupylation.</text>
</comment>
<comment type="pathway">
    <text evidence="1">Protein degradation; proteasomal Pup-dependent pathway.</text>
</comment>
<comment type="subunit">
    <text evidence="1">Strongly interacts with the proteasome-associated ATPase ARC through a hydrophobic interface; the interacting region of Pup lies in its C-terminal half. There is one Pup binding site per ARC hexamer ring.</text>
</comment>
<comment type="domain">
    <text evidence="1">The N-terminal unstructured half of Pup provides a signal required to initiate unfolding and degradation by the proteasome but is not needed for pupylation, while the C-terminal helical half of Pup interacts with ARC to target proteins to the proteasome.</text>
</comment>
<comment type="similarity">
    <text evidence="1">Belongs to the prokaryotic ubiquitin-like protein family.</text>
</comment>
<gene>
    <name evidence="1" type="primary">pup</name>
    <name type="ordered locus">Acel_1187</name>
</gene>
<accession>A0LU49</accession>